<name>CGDA2_ARTG1</name>
<keyword id="KW-0002">3D-structure</keyword>
<keyword id="KW-0119">Carbohydrate metabolism</keyword>
<keyword id="KW-0456">Lyase</keyword>
<keyword id="KW-0464">Manganese</keyword>
<keyword id="KW-0479">Metal-binding</keyword>
<keyword id="KW-1185">Reference proteome</keyword>
<sequence>MSEGIAGSGIELGITLYSLTSEFAAGLYTPETLIKAVADEGLGPGVEFNIAQMLRTYPDVDDDFVKLWRDSMDRYGLTPSAVGTNLDMGRRKDRDMTPDEEYDFFAAQLRTANKLGFHRVVIRSAGKELLRRLLPLAEKYDQKLGYEIHAPQGPNDPKILQIREMYAELGSDRLGFTADFSSTMHSLSPTLFRTLTQMGLPEEHFAVMQDIWRKPLPMQERNQEFEDYLRANNFDPAQLGPFTRLAFNMHGLVPPEEWLDIMPQIFHVHAKFYDIDENGNEPAMDIPRIVRQFVKGGYRGYLSSEWEGHAFADLGESDPIDLVKKQHSLMRRAIEEAVDPTVSQPALVETAK</sequence>
<reference key="1">
    <citation type="submission" date="2011-12" db="EMBL/GenBank/DDBJ databases">
        <title>Whole genome shotgun sequence of Arthrobacter globiformis NBRC 12137.</title>
        <authorList>
            <person name="Miyazawa S."/>
            <person name="Hosoyama A."/>
            <person name="Tsuchikane K."/>
            <person name="Katsumata H."/>
            <person name="Yamazaki S."/>
            <person name="Fujita N."/>
        </authorList>
    </citation>
    <scope>NUCLEOTIDE SEQUENCE [LARGE SCALE GENOMIC DNA]</scope>
    <source>
        <strain>ATCC 8010 / DSM 20124 / JCM 1332 / NBRC 12137 / NCIMB 8907 / NRRL B-2979 / 168</strain>
    </source>
</reference>
<reference evidence="6 7" key="2">
    <citation type="journal article" date="2021" name="Nat. Commun.">
        <title>C-Glycoside metabolism in the gut and in nature: Identification, characterization, structural analyses and distribution of C-C bond-cleaving enzymes.</title>
        <authorList>
            <person name="Mori T."/>
            <person name="Kumano T."/>
            <person name="He H."/>
            <person name="Watanabe S."/>
            <person name="Senda M."/>
            <person name="Moriya T."/>
            <person name="Adachi N."/>
            <person name="Hori S."/>
            <person name="Terashita Y."/>
            <person name="Kawasaki M."/>
            <person name="Hashimoto Y."/>
            <person name="Awakawa T."/>
            <person name="Senda T."/>
            <person name="Abe I."/>
            <person name="Kobayashi M."/>
        </authorList>
    </citation>
    <scope>X-RAY CRYSTALLOGRAPHY (2.25 ANGSTROMS) IN COMPLEX WITH CARC2; MN(2+) AND HOMOORIENTIN</scope>
    <scope>FUNCTION</scope>
    <scope>CATALYTIC ACTIVITY</scope>
    <scope>COFACTOR</scope>
    <scope>ACTIVITY REGULATION</scope>
    <scope>BIOPHYSICOCHEMICAL PROPERTIES</scope>
    <scope>SUBUNIT</scope>
    <source>
        <strain>ATCC 8010 / DSM 20124 / JCM 1332 / NBRC 12137 / NCIMB 8907 / NRRL B-2979 / 168</strain>
    </source>
</reference>
<protein>
    <recommendedName>
        <fullName evidence="2">C-glycoside deglycosidase alpha subunit</fullName>
        <shortName evidence="2">CGD alpha subunit</shortName>
        <ecNumber evidence="1">4.1.99.-</ecNumber>
    </recommendedName>
    <alternativeName>
        <fullName evidence="2">AgCGD2 alpha</fullName>
    </alternativeName>
    <alternativeName>
        <fullName evidence="2">C-deglycosylation enzyme alpha subunit</fullName>
    </alternativeName>
</protein>
<comment type="function">
    <text evidence="1">Carbon-carbon bond-cleaving enzyme which participates in the metabolism of C-glycosides (PubMed:34728636). Acts on the C8-glycosylated compound 3''-dehydroorientin (3''-oxo-orientin) (PubMed:34728636).</text>
</comment>
<comment type="catalytic activity">
    <reaction evidence="1">
        <text>3''-dehydroorientin = 1,5-anhydro-D-erythro-hex-1-en-3-ulose + luteolin</text>
        <dbReference type="Rhea" id="RHEA:78767"/>
        <dbReference type="ChEBI" id="CHEBI:57545"/>
        <dbReference type="ChEBI" id="CHEBI:195275"/>
        <dbReference type="ChEBI" id="CHEBI:229564"/>
    </reaction>
</comment>
<comment type="cofactor">
    <cofactor evidence="1">
        <name>a divalent metal cation</name>
        <dbReference type="ChEBI" id="CHEBI:60240"/>
    </cofactor>
    <text evidence="1">Can use Mn(2+), Mg(2+), Ca(2+), Co(2+) and Ni(2+).</text>
</comment>
<comment type="activity regulation">
    <text evidence="1">Activity is strongly reduced in the presence of chelating agents.</text>
</comment>
<comment type="biophysicochemical properties">
    <kinetics>
        <text evidence="1">kcat is 40 min(-1) with 3''-dehydroorientin as substrate.</text>
    </kinetics>
    <temperatureDependence>
        <text evidence="1">Optimum temperature is around 40 degrees Celsius.</text>
    </temperatureDependence>
</comment>
<comment type="subunit">
    <text evidence="1">Heterodimer composed of an alpha subunit (CarB2) and a beta subunit (CarC2).</text>
</comment>
<comment type="similarity">
    <text evidence="3">Belongs to the C-glycoside deglycosidase alpha subunit family.</text>
</comment>
<proteinExistence type="evidence at protein level"/>
<accession>H0QPL9</accession>
<gene>
    <name evidence="2" type="primary">carB2</name>
    <name evidence="5" type="ORF">ARGLB_075_00530</name>
</gene>
<organism>
    <name type="scientific">Arthrobacter globiformis (strain ATCC 8010 / DSM 20124 / JCM 1332 / NBRC 12137 / NCIMB 8907 / NRRL B-2979 / 168)</name>
    <dbReference type="NCBI Taxonomy" id="1077972"/>
    <lineage>
        <taxon>Bacteria</taxon>
        <taxon>Bacillati</taxon>
        <taxon>Actinomycetota</taxon>
        <taxon>Actinomycetes</taxon>
        <taxon>Micrococcales</taxon>
        <taxon>Micrococcaceae</taxon>
        <taxon>Arthrobacter</taxon>
    </lineage>
</organism>
<evidence type="ECO:0000269" key="1">
    <source>
    </source>
</evidence>
<evidence type="ECO:0000303" key="2">
    <source>
    </source>
</evidence>
<evidence type="ECO:0000305" key="3"/>
<evidence type="ECO:0000305" key="4">
    <source>
    </source>
</evidence>
<evidence type="ECO:0000312" key="5">
    <source>
        <dbReference type="EMBL" id="GAB14770.1"/>
    </source>
</evidence>
<evidence type="ECO:0007744" key="6">
    <source>
        <dbReference type="PDB" id="7DNM"/>
    </source>
</evidence>
<evidence type="ECO:0007744" key="7">
    <source>
        <dbReference type="PDB" id="7DNN"/>
    </source>
</evidence>
<evidence type="ECO:0007829" key="8">
    <source>
        <dbReference type="PDB" id="7DNN"/>
    </source>
</evidence>
<dbReference type="EC" id="4.1.99.-" evidence="1"/>
<dbReference type="EMBL" id="BAEG01000075">
    <property type="protein sequence ID" value="GAB14770.1"/>
    <property type="molecule type" value="Genomic_DNA"/>
</dbReference>
<dbReference type="RefSeq" id="WP_003803556.1">
    <property type="nucleotide sequence ID" value="NZ_BAEG01000075.1"/>
</dbReference>
<dbReference type="PDB" id="7DNM">
    <property type="method" value="X-ray"/>
    <property type="resolution" value="2.30 A"/>
    <property type="chains" value="A/P=1-352"/>
</dbReference>
<dbReference type="PDB" id="7DNN">
    <property type="method" value="X-ray"/>
    <property type="resolution" value="2.25 A"/>
    <property type="chains" value="A/P=1-352"/>
</dbReference>
<dbReference type="PDBsum" id="7DNM"/>
<dbReference type="PDBsum" id="7DNN"/>
<dbReference type="SMR" id="H0QPL9"/>
<dbReference type="STRING" id="1077972.ARGLB_075_00530"/>
<dbReference type="eggNOG" id="COG1082">
    <property type="taxonomic scope" value="Bacteria"/>
</dbReference>
<dbReference type="OrthoDB" id="3520171at2"/>
<dbReference type="Proteomes" id="UP000003828">
    <property type="component" value="Unassembled WGS sequence"/>
</dbReference>
<dbReference type="GO" id="GO:0016829">
    <property type="term" value="F:lyase activity"/>
    <property type="evidence" value="ECO:0007669"/>
    <property type="project" value="UniProtKB-KW"/>
</dbReference>
<dbReference type="GO" id="GO:0046872">
    <property type="term" value="F:metal ion binding"/>
    <property type="evidence" value="ECO:0007669"/>
    <property type="project" value="UniProtKB-KW"/>
</dbReference>
<dbReference type="Gene3D" id="3.20.20.150">
    <property type="entry name" value="Divalent-metal-dependent TIM barrel enzymes"/>
    <property type="match status" value="1"/>
</dbReference>
<dbReference type="InterPro" id="IPR050312">
    <property type="entry name" value="IolE/XylAMocC-like"/>
</dbReference>
<dbReference type="InterPro" id="IPR036237">
    <property type="entry name" value="Xyl_isomerase-like_sf"/>
</dbReference>
<dbReference type="InterPro" id="IPR013022">
    <property type="entry name" value="Xyl_isomerase-like_TIM-brl"/>
</dbReference>
<dbReference type="PANTHER" id="PTHR12110">
    <property type="entry name" value="HYDROXYPYRUVATE ISOMERASE"/>
    <property type="match status" value="1"/>
</dbReference>
<dbReference type="Pfam" id="PF01261">
    <property type="entry name" value="AP_endonuc_2"/>
    <property type="match status" value="1"/>
</dbReference>
<dbReference type="SUPFAM" id="SSF51658">
    <property type="entry name" value="Xylose isomerase-like"/>
    <property type="match status" value="1"/>
</dbReference>
<feature type="chain" id="PRO_0000461024" description="C-glycoside deglycosidase alpha subunit">
    <location>
        <begin position="1"/>
        <end position="352"/>
    </location>
</feature>
<feature type="active site" description="Proton acceptor" evidence="4">
    <location>
        <position position="149"/>
    </location>
</feature>
<feature type="binding site" evidence="1 6 7">
    <location>
        <position position="147"/>
    </location>
    <ligand>
        <name>Mn(2+)</name>
        <dbReference type="ChEBI" id="CHEBI:29035"/>
    </ligand>
</feature>
<feature type="binding site" evidence="1 6 7">
    <location>
        <position position="179"/>
    </location>
    <ligand>
        <name>Mn(2+)</name>
        <dbReference type="ChEBI" id="CHEBI:29035"/>
    </ligand>
</feature>
<feature type="binding site" evidence="1 6 7">
    <location>
        <position position="269"/>
    </location>
    <ligand>
        <name>Mn(2+)</name>
        <dbReference type="ChEBI" id="CHEBI:29035"/>
    </ligand>
</feature>
<feature type="binding site" evidence="1 6 7">
    <location>
        <position position="305"/>
    </location>
    <ligand>
        <name>Mn(2+)</name>
        <dbReference type="ChEBI" id="CHEBI:29035"/>
    </ligand>
</feature>
<feature type="helix" evidence="8">
    <location>
        <begin position="5"/>
        <end position="7"/>
    </location>
</feature>
<feature type="strand" evidence="8">
    <location>
        <begin position="8"/>
        <end position="15"/>
    </location>
</feature>
<feature type="helix" evidence="8">
    <location>
        <begin position="16"/>
        <end position="19"/>
    </location>
</feature>
<feature type="helix" evidence="8">
    <location>
        <begin position="20"/>
        <end position="24"/>
    </location>
</feature>
<feature type="helix" evidence="8">
    <location>
        <begin position="30"/>
        <end position="39"/>
    </location>
</feature>
<feature type="strand" evidence="8">
    <location>
        <begin position="44"/>
        <end position="49"/>
    </location>
</feature>
<feature type="helix" evidence="8">
    <location>
        <begin position="50"/>
        <end position="53"/>
    </location>
</feature>
<feature type="turn" evidence="8">
    <location>
        <begin position="55"/>
        <end position="58"/>
    </location>
</feature>
<feature type="helix" evidence="8">
    <location>
        <begin position="62"/>
        <end position="74"/>
    </location>
</feature>
<feature type="strand" evidence="8">
    <location>
        <begin position="78"/>
        <end position="83"/>
    </location>
</feature>
<feature type="strand" evidence="8">
    <location>
        <begin position="91"/>
        <end position="94"/>
    </location>
</feature>
<feature type="helix" evidence="8">
    <location>
        <begin position="98"/>
        <end position="114"/>
    </location>
</feature>
<feature type="strand" evidence="8">
    <location>
        <begin position="118"/>
        <end position="122"/>
    </location>
</feature>
<feature type="helix" evidence="8">
    <location>
        <begin position="127"/>
        <end position="140"/>
    </location>
</feature>
<feature type="strand" evidence="8">
    <location>
        <begin position="143"/>
        <end position="148"/>
    </location>
</feature>
<feature type="helix" evidence="8">
    <location>
        <begin position="157"/>
        <end position="169"/>
    </location>
</feature>
<feature type="strand" evidence="8">
    <location>
        <begin position="174"/>
        <end position="179"/>
    </location>
</feature>
<feature type="helix" evidence="8">
    <location>
        <begin position="180"/>
        <end position="182"/>
    </location>
</feature>
<feature type="helix" evidence="8">
    <location>
        <begin position="189"/>
        <end position="197"/>
    </location>
</feature>
<feature type="helix" evidence="8">
    <location>
        <begin position="204"/>
        <end position="213"/>
    </location>
</feature>
<feature type="strand" evidence="8">
    <location>
        <begin position="214"/>
        <end position="216"/>
    </location>
</feature>
<feature type="helix" evidence="8">
    <location>
        <begin position="218"/>
        <end position="231"/>
    </location>
</feature>
<feature type="helix" evidence="8">
    <location>
        <begin position="236"/>
        <end position="239"/>
    </location>
</feature>
<feature type="helix" evidence="8">
    <location>
        <begin position="242"/>
        <end position="249"/>
    </location>
</feature>
<feature type="helix" evidence="8">
    <location>
        <begin position="255"/>
        <end position="264"/>
    </location>
</feature>
<feature type="strand" evidence="8">
    <location>
        <begin position="265"/>
        <end position="273"/>
    </location>
</feature>
<feature type="helix" evidence="8">
    <location>
        <begin position="286"/>
        <end position="295"/>
    </location>
</feature>
<feature type="strand" evidence="8">
    <location>
        <begin position="300"/>
        <end position="306"/>
    </location>
</feature>
<feature type="helix" evidence="8">
    <location>
        <begin position="308"/>
        <end position="310"/>
    </location>
</feature>
<feature type="helix" evidence="8">
    <location>
        <begin position="319"/>
        <end position="337"/>
    </location>
</feature>